<organism>
    <name type="scientific">Synechococcus sp. (strain CC9902)</name>
    <dbReference type="NCBI Taxonomy" id="316279"/>
    <lineage>
        <taxon>Bacteria</taxon>
        <taxon>Bacillati</taxon>
        <taxon>Cyanobacteriota</taxon>
        <taxon>Cyanophyceae</taxon>
        <taxon>Synechococcales</taxon>
        <taxon>Synechococcaceae</taxon>
        <taxon>Synechococcus</taxon>
    </lineage>
</organism>
<name>PSAE_SYNS9</name>
<gene>
    <name evidence="1" type="primary">psaE</name>
    <name type="ordered locus">Syncc9902_1842</name>
</gene>
<sequence>MAISRGAKVRIKRPESYWFNEVGTVATIDTSGIRYPVVVRFEKVNYSGMQGVDGGINTNNFAESELESA</sequence>
<keyword id="KW-0472">Membrane</keyword>
<keyword id="KW-0602">Photosynthesis</keyword>
<keyword id="KW-0603">Photosystem I</keyword>
<keyword id="KW-1185">Reference proteome</keyword>
<keyword id="KW-0793">Thylakoid</keyword>
<proteinExistence type="inferred from homology"/>
<dbReference type="EMBL" id="CP000097">
    <property type="protein sequence ID" value="ABB26799.1"/>
    <property type="molecule type" value="Genomic_DNA"/>
</dbReference>
<dbReference type="RefSeq" id="WP_011360603.1">
    <property type="nucleotide sequence ID" value="NC_007513.1"/>
</dbReference>
<dbReference type="SMR" id="Q3AWF7"/>
<dbReference type="STRING" id="316279.Syncc9902_1842"/>
<dbReference type="KEGG" id="sye:Syncc9902_1842"/>
<dbReference type="eggNOG" id="ENOG503313D">
    <property type="taxonomic scope" value="Bacteria"/>
</dbReference>
<dbReference type="HOGENOM" id="CLU_136462_2_1_3"/>
<dbReference type="OrthoDB" id="427926at2"/>
<dbReference type="Proteomes" id="UP000002712">
    <property type="component" value="Chromosome"/>
</dbReference>
<dbReference type="GO" id="GO:0009538">
    <property type="term" value="C:photosystem I reaction center"/>
    <property type="evidence" value="ECO:0007669"/>
    <property type="project" value="InterPro"/>
</dbReference>
<dbReference type="GO" id="GO:0031676">
    <property type="term" value="C:plasma membrane-derived thylakoid membrane"/>
    <property type="evidence" value="ECO:0007669"/>
    <property type="project" value="UniProtKB-SubCell"/>
</dbReference>
<dbReference type="GO" id="GO:0015979">
    <property type="term" value="P:photosynthesis"/>
    <property type="evidence" value="ECO:0007669"/>
    <property type="project" value="UniProtKB-UniRule"/>
</dbReference>
<dbReference type="Gene3D" id="2.30.30.50">
    <property type="match status" value="1"/>
</dbReference>
<dbReference type="HAMAP" id="MF_00613">
    <property type="entry name" value="PSI_PsaE"/>
    <property type="match status" value="1"/>
</dbReference>
<dbReference type="InterPro" id="IPR008990">
    <property type="entry name" value="Elect_transpt_acc-like_dom_sf"/>
</dbReference>
<dbReference type="InterPro" id="IPR003375">
    <property type="entry name" value="PSI_PsaE"/>
</dbReference>
<dbReference type="NCBIfam" id="NF002745">
    <property type="entry name" value="PRK02749.1"/>
    <property type="match status" value="1"/>
</dbReference>
<dbReference type="PANTHER" id="PTHR34549">
    <property type="entry name" value="PHOTOSYSTEM I REACTION CENTER SUBUNIT IV A, CHLOROPLASTIC-RELATED"/>
    <property type="match status" value="1"/>
</dbReference>
<dbReference type="PANTHER" id="PTHR34549:SF2">
    <property type="entry name" value="PHOTOSYSTEM I SUBUNIT IV"/>
    <property type="match status" value="1"/>
</dbReference>
<dbReference type="Pfam" id="PF02427">
    <property type="entry name" value="PSI_PsaE"/>
    <property type="match status" value="1"/>
</dbReference>
<dbReference type="SUPFAM" id="SSF50090">
    <property type="entry name" value="Electron transport accessory proteins"/>
    <property type="match status" value="1"/>
</dbReference>
<accession>Q3AWF7</accession>
<feature type="chain" id="PRO_1000061314" description="Photosystem I reaction center subunit IV">
    <location>
        <begin position="1"/>
        <end position="69"/>
    </location>
</feature>
<protein>
    <recommendedName>
        <fullName evidence="1">Photosystem I reaction center subunit IV</fullName>
    </recommendedName>
</protein>
<reference key="1">
    <citation type="submission" date="2005-08" db="EMBL/GenBank/DDBJ databases">
        <title>Complete sequence of Synechococcus sp. CC9902.</title>
        <authorList>
            <person name="Copeland A."/>
            <person name="Lucas S."/>
            <person name="Lapidus A."/>
            <person name="Barry K."/>
            <person name="Detter J.C."/>
            <person name="Glavina T."/>
            <person name="Hammon N."/>
            <person name="Israni S."/>
            <person name="Pitluck S."/>
            <person name="Martinez M."/>
            <person name="Schmutz J."/>
            <person name="Larimer F."/>
            <person name="Land M."/>
            <person name="Kyrpides N."/>
            <person name="Ivanova N."/>
            <person name="Richardson P."/>
        </authorList>
    </citation>
    <scope>NUCLEOTIDE SEQUENCE [LARGE SCALE GENOMIC DNA]</scope>
    <source>
        <strain>CC9902</strain>
    </source>
</reference>
<comment type="function">
    <text evidence="1">Stabilizes the interaction between PsaC and the PSI core, assists the docking of the ferredoxin to PSI and interacts with ferredoxin-NADP oxidoreductase.</text>
</comment>
<comment type="subcellular location">
    <subcellularLocation>
        <location evidence="1">Cellular thylakoid membrane</location>
        <topology evidence="1">Peripheral membrane protein</topology>
    </subcellularLocation>
</comment>
<comment type="similarity">
    <text evidence="1">Belongs to the PsaE family.</text>
</comment>
<evidence type="ECO:0000255" key="1">
    <source>
        <dbReference type="HAMAP-Rule" id="MF_00613"/>
    </source>
</evidence>